<name>PYRB_OENOB</name>
<feature type="chain" id="PRO_0000321129" description="Aspartate carbamoyltransferase catalytic subunit">
    <location>
        <begin position="1"/>
        <end position="308"/>
    </location>
</feature>
<feature type="binding site" evidence="1">
    <location>
        <position position="50"/>
    </location>
    <ligand>
        <name>carbamoyl phosphate</name>
        <dbReference type="ChEBI" id="CHEBI:58228"/>
    </ligand>
</feature>
<feature type="binding site" evidence="1">
    <location>
        <position position="51"/>
    </location>
    <ligand>
        <name>carbamoyl phosphate</name>
        <dbReference type="ChEBI" id="CHEBI:58228"/>
    </ligand>
</feature>
<feature type="binding site" evidence="1">
    <location>
        <position position="78"/>
    </location>
    <ligand>
        <name>L-aspartate</name>
        <dbReference type="ChEBI" id="CHEBI:29991"/>
    </ligand>
</feature>
<feature type="binding site" evidence="1">
    <location>
        <position position="100"/>
    </location>
    <ligand>
        <name>carbamoyl phosphate</name>
        <dbReference type="ChEBI" id="CHEBI:58228"/>
    </ligand>
</feature>
<feature type="binding site" evidence="1">
    <location>
        <position position="131"/>
    </location>
    <ligand>
        <name>carbamoyl phosphate</name>
        <dbReference type="ChEBI" id="CHEBI:58228"/>
    </ligand>
</feature>
<feature type="binding site" evidence="1">
    <location>
        <position position="134"/>
    </location>
    <ligand>
        <name>carbamoyl phosphate</name>
        <dbReference type="ChEBI" id="CHEBI:58228"/>
    </ligand>
</feature>
<feature type="binding site" evidence="1">
    <location>
        <position position="164"/>
    </location>
    <ligand>
        <name>L-aspartate</name>
        <dbReference type="ChEBI" id="CHEBI:29991"/>
    </ligand>
</feature>
<feature type="binding site" evidence="1">
    <location>
        <position position="216"/>
    </location>
    <ligand>
        <name>L-aspartate</name>
        <dbReference type="ChEBI" id="CHEBI:29991"/>
    </ligand>
</feature>
<feature type="binding site" evidence="1">
    <location>
        <position position="259"/>
    </location>
    <ligand>
        <name>carbamoyl phosphate</name>
        <dbReference type="ChEBI" id="CHEBI:58228"/>
    </ligand>
</feature>
<feature type="binding site" evidence="1">
    <location>
        <position position="260"/>
    </location>
    <ligand>
        <name>carbamoyl phosphate</name>
        <dbReference type="ChEBI" id="CHEBI:58228"/>
    </ligand>
</feature>
<reference key="1">
    <citation type="journal article" date="2006" name="Proc. Natl. Acad. Sci. U.S.A.">
        <title>Comparative genomics of the lactic acid bacteria.</title>
        <authorList>
            <person name="Makarova K.S."/>
            <person name="Slesarev A."/>
            <person name="Wolf Y.I."/>
            <person name="Sorokin A."/>
            <person name="Mirkin B."/>
            <person name="Koonin E.V."/>
            <person name="Pavlov A."/>
            <person name="Pavlova N."/>
            <person name="Karamychev V."/>
            <person name="Polouchine N."/>
            <person name="Shakhova V."/>
            <person name="Grigoriev I."/>
            <person name="Lou Y."/>
            <person name="Rohksar D."/>
            <person name="Lucas S."/>
            <person name="Huang K."/>
            <person name="Goodstein D.M."/>
            <person name="Hawkins T."/>
            <person name="Plengvidhya V."/>
            <person name="Welker D."/>
            <person name="Hughes J."/>
            <person name="Goh Y."/>
            <person name="Benson A."/>
            <person name="Baldwin K."/>
            <person name="Lee J.-H."/>
            <person name="Diaz-Muniz I."/>
            <person name="Dosti B."/>
            <person name="Smeianov V."/>
            <person name="Wechter W."/>
            <person name="Barabote R."/>
            <person name="Lorca G."/>
            <person name="Altermann E."/>
            <person name="Barrangou R."/>
            <person name="Ganesan B."/>
            <person name="Xie Y."/>
            <person name="Rawsthorne H."/>
            <person name="Tamir D."/>
            <person name="Parker C."/>
            <person name="Breidt F."/>
            <person name="Broadbent J.R."/>
            <person name="Hutkins R."/>
            <person name="O'Sullivan D."/>
            <person name="Steele J."/>
            <person name="Unlu G."/>
            <person name="Saier M.H. Jr."/>
            <person name="Klaenhammer T."/>
            <person name="Richardson P."/>
            <person name="Kozyavkin S."/>
            <person name="Weimer B.C."/>
            <person name="Mills D.A."/>
        </authorList>
    </citation>
    <scope>NUCLEOTIDE SEQUENCE [LARGE SCALE GENOMIC DNA]</scope>
    <source>
        <strain>ATCC BAA-331 / PSU-1</strain>
    </source>
</reference>
<sequence length="308" mass="34962">MANVFVNINDLSNQELLSMIHQALLFKSGQFIPVINRQVVANLFFENSTRTATSFQMAEMKLGYQRIVIDPNKSSATKGESLEDTLKTLKAIGIDTIVIRHSLRDWYQPFYEMAGKEVPKLVNAGDGNGQHPSQSLLDLMTIVEHFENFVGLRVRIIGDIYHSRVARSNAEILNRLGVEVTFSGPKEWQDQSLEQFGSFVGIDKDLGKQDVIMLLRVQHERLTDEENQDFTIDKYHEDYGLTQDRYRKLKSNAIIMHPAPVNRDVEIDSDLVESDKSRIFQQMKNGVYARMAILNSLTIPSLISGVGK</sequence>
<keyword id="KW-0665">Pyrimidine biosynthesis</keyword>
<keyword id="KW-1185">Reference proteome</keyword>
<keyword id="KW-0808">Transferase</keyword>
<evidence type="ECO:0000255" key="1">
    <source>
        <dbReference type="HAMAP-Rule" id="MF_00001"/>
    </source>
</evidence>
<dbReference type="EC" id="2.1.3.2" evidence="1"/>
<dbReference type="EMBL" id="CP000411">
    <property type="protein sequence ID" value="ABJ56240.1"/>
    <property type="molecule type" value="Genomic_DNA"/>
</dbReference>
<dbReference type="RefSeq" id="WP_011677391.1">
    <property type="nucleotide sequence ID" value="NC_008528.1"/>
</dbReference>
<dbReference type="SMR" id="Q04H32"/>
<dbReference type="STRING" id="203123.OEOE_0258"/>
<dbReference type="KEGG" id="ooe:OEOE_0258"/>
<dbReference type="PATRIC" id="fig|203123.7.peg.266"/>
<dbReference type="eggNOG" id="COG0540">
    <property type="taxonomic scope" value="Bacteria"/>
</dbReference>
<dbReference type="HOGENOM" id="CLU_043846_2_1_9"/>
<dbReference type="UniPathway" id="UPA00070">
    <property type="reaction ID" value="UER00116"/>
</dbReference>
<dbReference type="Proteomes" id="UP000000774">
    <property type="component" value="Chromosome"/>
</dbReference>
<dbReference type="GO" id="GO:0005829">
    <property type="term" value="C:cytosol"/>
    <property type="evidence" value="ECO:0007669"/>
    <property type="project" value="TreeGrafter"/>
</dbReference>
<dbReference type="GO" id="GO:0016597">
    <property type="term" value="F:amino acid binding"/>
    <property type="evidence" value="ECO:0007669"/>
    <property type="project" value="InterPro"/>
</dbReference>
<dbReference type="GO" id="GO:0004070">
    <property type="term" value="F:aspartate carbamoyltransferase activity"/>
    <property type="evidence" value="ECO:0007669"/>
    <property type="project" value="UniProtKB-UniRule"/>
</dbReference>
<dbReference type="GO" id="GO:0006207">
    <property type="term" value="P:'de novo' pyrimidine nucleobase biosynthetic process"/>
    <property type="evidence" value="ECO:0007669"/>
    <property type="project" value="InterPro"/>
</dbReference>
<dbReference type="GO" id="GO:0044205">
    <property type="term" value="P:'de novo' UMP biosynthetic process"/>
    <property type="evidence" value="ECO:0007669"/>
    <property type="project" value="UniProtKB-UniRule"/>
</dbReference>
<dbReference type="GO" id="GO:0006520">
    <property type="term" value="P:amino acid metabolic process"/>
    <property type="evidence" value="ECO:0007669"/>
    <property type="project" value="InterPro"/>
</dbReference>
<dbReference type="FunFam" id="3.40.50.1370:FF:000011">
    <property type="entry name" value="Aspartate carbamoyltransferase"/>
    <property type="match status" value="1"/>
</dbReference>
<dbReference type="Gene3D" id="3.40.50.1370">
    <property type="entry name" value="Aspartate/ornithine carbamoyltransferase"/>
    <property type="match status" value="2"/>
</dbReference>
<dbReference type="HAMAP" id="MF_00001">
    <property type="entry name" value="Asp_carb_tr"/>
    <property type="match status" value="1"/>
</dbReference>
<dbReference type="InterPro" id="IPR006132">
    <property type="entry name" value="Asp/Orn_carbamoyltranf_P-bd"/>
</dbReference>
<dbReference type="InterPro" id="IPR006130">
    <property type="entry name" value="Asp/Orn_carbamoylTrfase"/>
</dbReference>
<dbReference type="InterPro" id="IPR036901">
    <property type="entry name" value="Asp/Orn_carbamoylTrfase_sf"/>
</dbReference>
<dbReference type="InterPro" id="IPR002082">
    <property type="entry name" value="Asp_carbamoyltransf"/>
</dbReference>
<dbReference type="InterPro" id="IPR006131">
    <property type="entry name" value="Asp_carbamoyltransf_Asp/Orn-bd"/>
</dbReference>
<dbReference type="NCBIfam" id="TIGR00670">
    <property type="entry name" value="asp_carb_tr"/>
    <property type="match status" value="1"/>
</dbReference>
<dbReference type="NCBIfam" id="NF002032">
    <property type="entry name" value="PRK00856.1"/>
    <property type="match status" value="1"/>
</dbReference>
<dbReference type="PANTHER" id="PTHR45753:SF6">
    <property type="entry name" value="ASPARTATE CARBAMOYLTRANSFERASE"/>
    <property type="match status" value="1"/>
</dbReference>
<dbReference type="PANTHER" id="PTHR45753">
    <property type="entry name" value="ORNITHINE CARBAMOYLTRANSFERASE, MITOCHONDRIAL"/>
    <property type="match status" value="1"/>
</dbReference>
<dbReference type="Pfam" id="PF00185">
    <property type="entry name" value="OTCace"/>
    <property type="match status" value="1"/>
</dbReference>
<dbReference type="Pfam" id="PF02729">
    <property type="entry name" value="OTCace_N"/>
    <property type="match status" value="1"/>
</dbReference>
<dbReference type="PRINTS" id="PR00100">
    <property type="entry name" value="AOTCASE"/>
</dbReference>
<dbReference type="PRINTS" id="PR00101">
    <property type="entry name" value="ATCASE"/>
</dbReference>
<dbReference type="SUPFAM" id="SSF53671">
    <property type="entry name" value="Aspartate/ornithine carbamoyltransferase"/>
    <property type="match status" value="1"/>
</dbReference>
<dbReference type="PROSITE" id="PS00097">
    <property type="entry name" value="CARBAMOYLTRANSFERASE"/>
    <property type="match status" value="1"/>
</dbReference>
<protein>
    <recommendedName>
        <fullName evidence="1">Aspartate carbamoyltransferase catalytic subunit</fullName>
        <ecNumber evidence="1">2.1.3.2</ecNumber>
    </recommendedName>
    <alternativeName>
        <fullName evidence="1">Aspartate transcarbamylase</fullName>
        <shortName evidence="1">ATCase</shortName>
    </alternativeName>
</protein>
<accession>Q04H32</accession>
<organism>
    <name type="scientific">Oenococcus oeni (strain ATCC BAA-331 / PSU-1)</name>
    <dbReference type="NCBI Taxonomy" id="203123"/>
    <lineage>
        <taxon>Bacteria</taxon>
        <taxon>Bacillati</taxon>
        <taxon>Bacillota</taxon>
        <taxon>Bacilli</taxon>
        <taxon>Lactobacillales</taxon>
        <taxon>Lactobacillaceae</taxon>
        <taxon>Oenococcus</taxon>
    </lineage>
</organism>
<proteinExistence type="inferred from homology"/>
<comment type="function">
    <text evidence="1">Catalyzes the condensation of carbamoyl phosphate and aspartate to form carbamoyl aspartate and inorganic phosphate, the committed step in the de novo pyrimidine nucleotide biosynthesis pathway.</text>
</comment>
<comment type="catalytic activity">
    <reaction evidence="1">
        <text>carbamoyl phosphate + L-aspartate = N-carbamoyl-L-aspartate + phosphate + H(+)</text>
        <dbReference type="Rhea" id="RHEA:20013"/>
        <dbReference type="ChEBI" id="CHEBI:15378"/>
        <dbReference type="ChEBI" id="CHEBI:29991"/>
        <dbReference type="ChEBI" id="CHEBI:32814"/>
        <dbReference type="ChEBI" id="CHEBI:43474"/>
        <dbReference type="ChEBI" id="CHEBI:58228"/>
        <dbReference type="EC" id="2.1.3.2"/>
    </reaction>
</comment>
<comment type="pathway">
    <text evidence="1">Pyrimidine metabolism; UMP biosynthesis via de novo pathway; (S)-dihydroorotate from bicarbonate: step 2/3.</text>
</comment>
<comment type="subunit">
    <text evidence="1">Heterododecamer (2C3:3R2) of six catalytic PyrB chains organized as two trimers (C3), and six regulatory PyrI chains organized as three dimers (R2).</text>
</comment>
<comment type="similarity">
    <text evidence="1">Belongs to the aspartate/ornithine carbamoyltransferase superfamily. ATCase family.</text>
</comment>
<gene>
    <name evidence="1" type="primary">pyrB</name>
    <name type="ordered locus">OEOE_0258</name>
</gene>